<evidence type="ECO:0000255" key="1">
    <source>
        <dbReference type="HAMAP-Rule" id="MF_00134"/>
    </source>
</evidence>
<comment type="catalytic activity">
    <reaction evidence="1">
        <text>1-(2-carboxyphenylamino)-1-deoxy-D-ribulose 5-phosphate + H(+) = (1S,2R)-1-C-(indol-3-yl)glycerol 3-phosphate + CO2 + H2O</text>
        <dbReference type="Rhea" id="RHEA:23476"/>
        <dbReference type="ChEBI" id="CHEBI:15377"/>
        <dbReference type="ChEBI" id="CHEBI:15378"/>
        <dbReference type="ChEBI" id="CHEBI:16526"/>
        <dbReference type="ChEBI" id="CHEBI:58613"/>
        <dbReference type="ChEBI" id="CHEBI:58866"/>
        <dbReference type="EC" id="4.1.1.48"/>
    </reaction>
</comment>
<comment type="pathway">
    <text evidence="1">Amino-acid biosynthesis; L-tryptophan biosynthesis; L-tryptophan from chorismate: step 4/5.</text>
</comment>
<comment type="similarity">
    <text evidence="1">Belongs to the TrpC family.</text>
</comment>
<gene>
    <name evidence="1" type="primary">trpC</name>
    <name type="ordered locus">Clim_0468</name>
</gene>
<protein>
    <recommendedName>
        <fullName evidence="1">Indole-3-glycerol phosphate synthase</fullName>
        <shortName evidence="1">IGPS</shortName>
        <ecNumber evidence="1">4.1.1.48</ecNumber>
    </recommendedName>
</protein>
<dbReference type="EC" id="4.1.1.48" evidence="1"/>
<dbReference type="EMBL" id="CP001097">
    <property type="protein sequence ID" value="ACD89561.1"/>
    <property type="molecule type" value="Genomic_DNA"/>
</dbReference>
<dbReference type="RefSeq" id="WP_012465442.1">
    <property type="nucleotide sequence ID" value="NC_010803.1"/>
</dbReference>
<dbReference type="SMR" id="B3EG28"/>
<dbReference type="STRING" id="290315.Clim_0468"/>
<dbReference type="KEGG" id="cli:Clim_0468"/>
<dbReference type="eggNOG" id="COG0134">
    <property type="taxonomic scope" value="Bacteria"/>
</dbReference>
<dbReference type="HOGENOM" id="CLU_034247_2_0_10"/>
<dbReference type="OrthoDB" id="9804217at2"/>
<dbReference type="UniPathway" id="UPA00035">
    <property type="reaction ID" value="UER00043"/>
</dbReference>
<dbReference type="Proteomes" id="UP000008841">
    <property type="component" value="Chromosome"/>
</dbReference>
<dbReference type="GO" id="GO:0004425">
    <property type="term" value="F:indole-3-glycerol-phosphate synthase activity"/>
    <property type="evidence" value="ECO:0007669"/>
    <property type="project" value="UniProtKB-UniRule"/>
</dbReference>
<dbReference type="GO" id="GO:0004640">
    <property type="term" value="F:phosphoribosylanthranilate isomerase activity"/>
    <property type="evidence" value="ECO:0007669"/>
    <property type="project" value="TreeGrafter"/>
</dbReference>
<dbReference type="GO" id="GO:0000162">
    <property type="term" value="P:L-tryptophan biosynthetic process"/>
    <property type="evidence" value="ECO:0007669"/>
    <property type="project" value="UniProtKB-UniRule"/>
</dbReference>
<dbReference type="CDD" id="cd00331">
    <property type="entry name" value="IGPS"/>
    <property type="match status" value="1"/>
</dbReference>
<dbReference type="FunFam" id="3.20.20.70:FF:000024">
    <property type="entry name" value="Indole-3-glycerol phosphate synthase"/>
    <property type="match status" value="1"/>
</dbReference>
<dbReference type="Gene3D" id="3.20.20.70">
    <property type="entry name" value="Aldolase class I"/>
    <property type="match status" value="1"/>
</dbReference>
<dbReference type="HAMAP" id="MF_00134_B">
    <property type="entry name" value="IGPS_B"/>
    <property type="match status" value="1"/>
</dbReference>
<dbReference type="InterPro" id="IPR013785">
    <property type="entry name" value="Aldolase_TIM"/>
</dbReference>
<dbReference type="InterPro" id="IPR045186">
    <property type="entry name" value="Indole-3-glycerol_P_synth"/>
</dbReference>
<dbReference type="InterPro" id="IPR013798">
    <property type="entry name" value="Indole-3-glycerol_P_synth_dom"/>
</dbReference>
<dbReference type="InterPro" id="IPR001468">
    <property type="entry name" value="Indole-3-GlycerolPSynthase_CS"/>
</dbReference>
<dbReference type="InterPro" id="IPR011060">
    <property type="entry name" value="RibuloseP-bd_barrel"/>
</dbReference>
<dbReference type="NCBIfam" id="NF001377">
    <property type="entry name" value="PRK00278.2-4"/>
    <property type="match status" value="1"/>
</dbReference>
<dbReference type="PANTHER" id="PTHR22854:SF2">
    <property type="entry name" value="INDOLE-3-GLYCEROL-PHOSPHATE SYNTHASE"/>
    <property type="match status" value="1"/>
</dbReference>
<dbReference type="PANTHER" id="PTHR22854">
    <property type="entry name" value="TRYPTOPHAN BIOSYNTHESIS PROTEIN"/>
    <property type="match status" value="1"/>
</dbReference>
<dbReference type="Pfam" id="PF00218">
    <property type="entry name" value="IGPS"/>
    <property type="match status" value="1"/>
</dbReference>
<dbReference type="SUPFAM" id="SSF51366">
    <property type="entry name" value="Ribulose-phoshate binding barrel"/>
    <property type="match status" value="1"/>
</dbReference>
<dbReference type="PROSITE" id="PS00614">
    <property type="entry name" value="IGPS"/>
    <property type="match status" value="1"/>
</dbReference>
<reference key="1">
    <citation type="submission" date="2008-05" db="EMBL/GenBank/DDBJ databases">
        <title>Complete sequence of Chlorobium limicola DSM 245.</title>
        <authorList>
            <consortium name="US DOE Joint Genome Institute"/>
            <person name="Lucas S."/>
            <person name="Copeland A."/>
            <person name="Lapidus A."/>
            <person name="Glavina del Rio T."/>
            <person name="Dalin E."/>
            <person name="Tice H."/>
            <person name="Bruce D."/>
            <person name="Goodwin L."/>
            <person name="Pitluck S."/>
            <person name="Schmutz J."/>
            <person name="Larimer F."/>
            <person name="Land M."/>
            <person name="Hauser L."/>
            <person name="Kyrpides N."/>
            <person name="Ovchinnikova G."/>
            <person name="Zhao F."/>
            <person name="Li T."/>
            <person name="Liu Z."/>
            <person name="Overmann J."/>
            <person name="Bryant D.A."/>
            <person name="Richardson P."/>
        </authorList>
    </citation>
    <scope>NUCLEOTIDE SEQUENCE [LARGE SCALE GENOMIC DNA]</scope>
    <source>
        <strain>DSM 245 / NBRC 103803 / 6330</strain>
    </source>
</reference>
<organism>
    <name type="scientific">Chlorobium limicola (strain DSM 245 / NBRC 103803 / 6330)</name>
    <dbReference type="NCBI Taxonomy" id="290315"/>
    <lineage>
        <taxon>Bacteria</taxon>
        <taxon>Pseudomonadati</taxon>
        <taxon>Chlorobiota</taxon>
        <taxon>Chlorobiia</taxon>
        <taxon>Chlorobiales</taxon>
        <taxon>Chlorobiaceae</taxon>
        <taxon>Chlorobium/Pelodictyon group</taxon>
        <taxon>Chlorobium</taxon>
    </lineage>
</organism>
<sequence>MTYLAKILDEKRHEVAELRKQRPQQRYEERKNDLSSCRDFAGNLKRTGENLRLIAEIKKASPSRGVIVHDFDPVDMARRYIGLGASAFSVLTDRLFFQGSIDYLETVKLQFHLPVIRKDFIIDERQIFESRLIGADAILLIVAALEASQLRDYLQLAAEIGLAVLVEVHDRQELDTAAEAGAGIIGVNNRNLKDFSVSLDTAIDLRPHFPEGVIAVAESGLKSADDIQRIGQASFDAVLIGEGLHVSPELHNVTWQKP</sequence>
<keyword id="KW-0028">Amino-acid biosynthesis</keyword>
<keyword id="KW-0057">Aromatic amino acid biosynthesis</keyword>
<keyword id="KW-0210">Decarboxylase</keyword>
<keyword id="KW-0456">Lyase</keyword>
<keyword id="KW-0822">Tryptophan biosynthesis</keyword>
<name>TRPC_CHLL2</name>
<accession>B3EG28</accession>
<feature type="chain" id="PRO_1000095858" description="Indole-3-glycerol phosphate synthase">
    <location>
        <begin position="1"/>
        <end position="258"/>
    </location>
</feature>
<proteinExistence type="inferred from homology"/>